<feature type="chain" id="PRO_0000460977" description="Chitin synthase C">
    <location>
        <begin position="1"/>
        <end position="1008"/>
    </location>
</feature>
<feature type="transmembrane region" description="Helical" evidence="1">
    <location>
        <begin position="642"/>
        <end position="662"/>
    </location>
</feature>
<feature type="transmembrane region" description="Helical" evidence="1">
    <location>
        <begin position="682"/>
        <end position="702"/>
    </location>
</feature>
<feature type="transmembrane region" description="Helical" evidence="1">
    <location>
        <begin position="717"/>
        <end position="737"/>
    </location>
</feature>
<feature type="transmembrane region" description="Helical" evidence="1">
    <location>
        <begin position="755"/>
        <end position="775"/>
    </location>
</feature>
<feature type="transmembrane region" description="Helical" evidence="1">
    <location>
        <begin position="787"/>
        <end position="807"/>
    </location>
</feature>
<feature type="transmembrane region" description="Helical" evidence="1">
    <location>
        <begin position="887"/>
        <end position="907"/>
    </location>
</feature>
<feature type="transmembrane region" description="Helical" evidence="1">
    <location>
        <begin position="910"/>
        <end position="930"/>
    </location>
</feature>
<feature type="region of interest" description="Disordered" evidence="3">
    <location>
        <begin position="1"/>
        <end position="160"/>
    </location>
</feature>
<feature type="compositionally biased region" description="Low complexity" evidence="3">
    <location>
        <begin position="10"/>
        <end position="19"/>
    </location>
</feature>
<feature type="compositionally biased region" description="Polar residues" evidence="3">
    <location>
        <begin position="34"/>
        <end position="45"/>
    </location>
</feature>
<feature type="glycosylation site" description="N-linked (GlcNAc...) asparagine" evidence="2">
    <location>
        <position position="312"/>
    </location>
</feature>
<feature type="glycosylation site" description="N-linked (GlcNAc...) asparagine" evidence="2">
    <location>
        <position position="833"/>
    </location>
</feature>
<feature type="glycosylation site" description="N-linked (GlcNAc...) asparagine" evidence="2">
    <location>
        <position position="961"/>
    </location>
</feature>
<dbReference type="EC" id="2.4.1.16" evidence="11"/>
<dbReference type="EMBL" id="AM270310">
    <property type="protein sequence ID" value="CAK41865.1"/>
    <property type="molecule type" value="Genomic_DNA"/>
</dbReference>
<dbReference type="RefSeq" id="XP_001400695.2">
    <property type="nucleotide sequence ID" value="XM_001400658.2"/>
</dbReference>
<dbReference type="SMR" id="A2R2G5"/>
<dbReference type="CAZy" id="GT2">
    <property type="family name" value="Glycosyltransferase Family 2"/>
</dbReference>
<dbReference type="EnsemblFungi" id="CAK41865">
    <property type="protein sequence ID" value="CAK41865"/>
    <property type="gene ID" value="An14g00660"/>
</dbReference>
<dbReference type="GeneID" id="4986920"/>
<dbReference type="KEGG" id="ang:An14g00660"/>
<dbReference type="VEuPathDB" id="FungiDB:An14g00660"/>
<dbReference type="HOGENOM" id="CLU_004760_1_1_1"/>
<dbReference type="Proteomes" id="UP000006706">
    <property type="component" value="Chromosome 1R"/>
</dbReference>
<dbReference type="GO" id="GO:0030428">
    <property type="term" value="C:cell septum"/>
    <property type="evidence" value="ECO:0007669"/>
    <property type="project" value="TreeGrafter"/>
</dbReference>
<dbReference type="GO" id="GO:0005935">
    <property type="term" value="C:cellular bud neck"/>
    <property type="evidence" value="ECO:0007669"/>
    <property type="project" value="EnsemblFungi"/>
</dbReference>
<dbReference type="GO" id="GO:0005886">
    <property type="term" value="C:plasma membrane"/>
    <property type="evidence" value="ECO:0007669"/>
    <property type="project" value="UniProtKB-SubCell"/>
</dbReference>
<dbReference type="GO" id="GO:0004100">
    <property type="term" value="F:chitin synthase activity"/>
    <property type="evidence" value="ECO:0007669"/>
    <property type="project" value="UniProtKB-EC"/>
</dbReference>
<dbReference type="GO" id="GO:0006031">
    <property type="term" value="P:chitin biosynthetic process"/>
    <property type="evidence" value="ECO:0007669"/>
    <property type="project" value="EnsemblFungi"/>
</dbReference>
<dbReference type="GO" id="GO:1902404">
    <property type="term" value="P:mitotic actomyosin contractile ring contraction"/>
    <property type="evidence" value="ECO:0007669"/>
    <property type="project" value="EnsemblFungi"/>
</dbReference>
<dbReference type="CDD" id="cd04190">
    <property type="entry name" value="Chitin_synth_C"/>
    <property type="match status" value="1"/>
</dbReference>
<dbReference type="InterPro" id="IPR004835">
    <property type="entry name" value="Chitin_synth"/>
</dbReference>
<dbReference type="InterPro" id="IPR004834">
    <property type="entry name" value="Chitin_synth_fun"/>
</dbReference>
<dbReference type="InterPro" id="IPR013616">
    <property type="entry name" value="Chitin_synth_N"/>
</dbReference>
<dbReference type="InterPro" id="IPR029044">
    <property type="entry name" value="Nucleotide-diphossugar_trans"/>
</dbReference>
<dbReference type="PANTHER" id="PTHR22914">
    <property type="entry name" value="CHITIN SYNTHASE"/>
    <property type="match status" value="1"/>
</dbReference>
<dbReference type="PANTHER" id="PTHR22914:SF38">
    <property type="entry name" value="CHITIN SYNTHASE 2"/>
    <property type="match status" value="1"/>
</dbReference>
<dbReference type="Pfam" id="PF01644">
    <property type="entry name" value="Chitin_synth_1"/>
    <property type="match status" value="1"/>
</dbReference>
<dbReference type="Pfam" id="PF08407">
    <property type="entry name" value="Chitin_synth_1N"/>
    <property type="match status" value="1"/>
</dbReference>
<dbReference type="SUPFAM" id="SSF53448">
    <property type="entry name" value="Nucleotide-diphospho-sugar transferases"/>
    <property type="match status" value="1"/>
</dbReference>
<evidence type="ECO:0000255" key="1"/>
<evidence type="ECO:0000255" key="2">
    <source>
        <dbReference type="PROSITE-ProRule" id="PRU00498"/>
    </source>
</evidence>
<evidence type="ECO:0000256" key="3">
    <source>
        <dbReference type="SAM" id="MobiDB-lite"/>
    </source>
</evidence>
<evidence type="ECO:0000269" key="4">
    <source>
    </source>
</evidence>
<evidence type="ECO:0000269" key="5">
    <source>
    </source>
</evidence>
<evidence type="ECO:0000269" key="6">
    <source>
    </source>
</evidence>
<evidence type="ECO:0000303" key="7">
    <source>
    </source>
</evidence>
<evidence type="ECO:0000303" key="8">
    <source>
    </source>
</evidence>
<evidence type="ECO:0000305" key="9"/>
<evidence type="ECO:0000305" key="10">
    <source>
    </source>
</evidence>
<evidence type="ECO:0000305" key="11">
    <source>
    </source>
</evidence>
<sequence length="1008" mass="112809">MIYEMMVMKRSANSRAQNNRRSERQRYYPYEPTESPSRPVSSLGNVPTIPPPAASTVDVPHYTSRPGSPTRPWSPNRVGNWARPPAPPSVASSQYERADLNGSPRPGTPSSRYGGSPRRPLPPAPLFSAPGGHDANIPINDAGDDDVFGGGGRTIDPNNRASMQSFMSESTIITDEKDAMSKVDLDDEMEETDEMVDPNIHYGPAPEKQSRRGVREAQMSTKEVQLINGELILECKIPTILHSFLPRRDDREFTHMRYTAVTCDPDDFTQRGYKLRQQIGSTMRETELLICITMYNEDEIGFTRTMHGVMQNITHLCSRSKSRTWGKDGWKKIVVCIIADGRKKVHPRTLNALAALGVYQEGIAKNVVNQKQVNAHVYEYTTQVSLDPDLKFKGAEKGIMPCQVLFCLKEHNKKKLNSHRWFFNAFGRALQPNICILLDVGTKPAPTALYHLWKAFDQNSNVAGAAGEIKAGKGKGMLGLLNPLVASQNFEYKMSNILDKPLESVFGYITVLPGALSAYRFFALQNDAEGNGPLNQYFKGETLHGQDADVFTANMYLAEDRILCWELVAKREERWVLKFVKSAVGETDVPDSIPEFISQRRRWLNGAFFAAVYSIVNAKQLWKTDHSLPRKILLQIEGAYQFMQLIFTYFGLANFYLVFYFIAGSLTDDKIDPFGHHIGKYIFVILRYACILVMCLQFIISMGNRPQGAKKLYLSGIIVYSIIMFYTIFCTMYLVVIEILARTGADTSLEVSDGLFVNIVMSLLSTVGLYFYASFLYLDPWHMFTSSAAYFIMLPSYICTLQVYAFCNTHDVSWGTKGDNVLNMDLGAARVVNGTTVQIEMPSEQLDIDSGYDAALRNLRDRVEVPETPITESQMQEDYYRAVRTYMVSIWMVANVILAMAISEVYGPDAGGTNIYLAIILWSVVVLALIRVIGSTTYAILLVVQKIVEGKTKFDAGNLANMSHVSGSSGGRSSTALKYGGGVSFKDKFAEAKWSAKRVAGKAMFWRK</sequence>
<comment type="function">
    <text evidence="4 5 6 10">Polymerizes chitin, a structural polymer of the cell wall and septum, by transferring the sugar moiety of UDP-GlcNAc to the non-reducing end of the growing chitin polymer (Probable). Involved in cell wall integrity and mycelial morphology (PubMed:37623572). Plays an important role in septal growth or maintenance (PubMed:38468360). Acts as a positive regulator of conidiation, cellular responses to oxidative stresses, and the production of malic acid (PubMed:29610994, PubMed:37623572, PubMed:38468360). Negatively regulates the citric acid production (PubMed:29610994, PubMed:37623572).</text>
</comment>
<comment type="catalytic activity">
    <reaction evidence="11">
        <text>[(1-&gt;4)-N-acetyl-beta-D-glucosaminyl](n) + UDP-N-acetyl-alpha-D-glucosamine = [(1-&gt;4)-N-acetyl-beta-D-glucosaminyl](n+1) + UDP + H(+)</text>
        <dbReference type="Rhea" id="RHEA:16637"/>
        <dbReference type="Rhea" id="RHEA-COMP:9593"/>
        <dbReference type="Rhea" id="RHEA-COMP:9595"/>
        <dbReference type="ChEBI" id="CHEBI:15378"/>
        <dbReference type="ChEBI" id="CHEBI:17029"/>
        <dbReference type="ChEBI" id="CHEBI:57705"/>
        <dbReference type="ChEBI" id="CHEBI:58223"/>
        <dbReference type="EC" id="2.4.1.16"/>
    </reaction>
    <physiologicalReaction direction="left-to-right" evidence="11">
        <dbReference type="Rhea" id="RHEA:16638"/>
    </physiologicalReaction>
</comment>
<comment type="subcellular location">
    <subcellularLocation>
        <location evidence="11">Cell membrane</location>
        <topology evidence="1">Multi-pass membrane protein</topology>
    </subcellularLocation>
</comment>
<comment type="disruption phenotype">
    <text evidence="4 5 6">Exhibits lower chitin content, reduced growth under the stresses of cell wall-disturbing and oxidative agents, more released protoplasts, a thicker conidial wall, decreased production of amylases, pectinases, cellulases, and malic acid, and increased citric acid production (PubMed:29610994, PubMed:37623572, PubMed:38468360). Reduces drastically spore production (PubMed:38468360).</text>
</comment>
<comment type="similarity">
    <text evidence="9">Belongs to the chitin synthase family. Class II subfamily.</text>
</comment>
<name>CHSC_ASPNC</name>
<gene>
    <name evidence="8" type="primary">chsC</name>
    <name evidence="7" type="synonym">chsA</name>
    <name type="ORF">An14g00660</name>
</gene>
<keyword id="KW-1003">Cell membrane</keyword>
<keyword id="KW-0325">Glycoprotein</keyword>
<keyword id="KW-0328">Glycosyltransferase</keyword>
<keyword id="KW-0472">Membrane</keyword>
<keyword id="KW-1185">Reference proteome</keyword>
<keyword id="KW-0808">Transferase</keyword>
<keyword id="KW-0812">Transmembrane</keyword>
<keyword id="KW-1133">Transmembrane helix</keyword>
<protein>
    <recommendedName>
        <fullName evidence="8">Chitin synthase C</fullName>
        <ecNumber evidence="11">2.4.1.16</ecNumber>
    </recommendedName>
    <alternativeName>
        <fullName evidence="9">Chitin-UDP acetyl-glucosaminyl transferase C</fullName>
    </alternativeName>
    <alternativeName>
        <fullName evidence="8">Class-II chitin synthase C</fullName>
    </alternativeName>
</protein>
<proteinExistence type="inferred from homology"/>
<accession>A2R2G5</accession>
<organism>
    <name type="scientific">Aspergillus niger (strain ATCC MYA-4892 / CBS 513.88 / FGSC A1513)</name>
    <dbReference type="NCBI Taxonomy" id="425011"/>
    <lineage>
        <taxon>Eukaryota</taxon>
        <taxon>Fungi</taxon>
        <taxon>Dikarya</taxon>
        <taxon>Ascomycota</taxon>
        <taxon>Pezizomycotina</taxon>
        <taxon>Eurotiomycetes</taxon>
        <taxon>Eurotiomycetidae</taxon>
        <taxon>Eurotiales</taxon>
        <taxon>Aspergillaceae</taxon>
        <taxon>Aspergillus</taxon>
        <taxon>Aspergillus subgen. Circumdati</taxon>
    </lineage>
</organism>
<reference key="1">
    <citation type="journal article" date="2007" name="Nat. Biotechnol.">
        <title>Genome sequencing and analysis of the versatile cell factory Aspergillus niger CBS 513.88.</title>
        <authorList>
            <person name="Pel H.J."/>
            <person name="de Winde J.H."/>
            <person name="Archer D.B."/>
            <person name="Dyer P.S."/>
            <person name="Hofmann G."/>
            <person name="Schaap P.J."/>
            <person name="Turner G."/>
            <person name="de Vries R.P."/>
            <person name="Albang R."/>
            <person name="Albermann K."/>
            <person name="Andersen M.R."/>
            <person name="Bendtsen J.D."/>
            <person name="Benen J.A.E."/>
            <person name="van den Berg M."/>
            <person name="Breestraat S."/>
            <person name="Caddick M.X."/>
            <person name="Contreras R."/>
            <person name="Cornell M."/>
            <person name="Coutinho P.M."/>
            <person name="Danchin E.G.J."/>
            <person name="Debets A.J.M."/>
            <person name="Dekker P."/>
            <person name="van Dijck P.W.M."/>
            <person name="van Dijk A."/>
            <person name="Dijkhuizen L."/>
            <person name="Driessen A.J.M."/>
            <person name="d'Enfert C."/>
            <person name="Geysens S."/>
            <person name="Goosen C."/>
            <person name="Groot G.S.P."/>
            <person name="de Groot P.W.J."/>
            <person name="Guillemette T."/>
            <person name="Henrissat B."/>
            <person name="Herweijer M."/>
            <person name="van den Hombergh J.P.T.W."/>
            <person name="van den Hondel C.A.M.J.J."/>
            <person name="van der Heijden R.T.J.M."/>
            <person name="van der Kaaij R.M."/>
            <person name="Klis F.M."/>
            <person name="Kools H.J."/>
            <person name="Kubicek C.P."/>
            <person name="van Kuyk P.A."/>
            <person name="Lauber J."/>
            <person name="Lu X."/>
            <person name="van der Maarel M.J.E.C."/>
            <person name="Meulenberg R."/>
            <person name="Menke H."/>
            <person name="Mortimer M.A."/>
            <person name="Nielsen J."/>
            <person name="Oliver S.G."/>
            <person name="Olsthoorn M."/>
            <person name="Pal K."/>
            <person name="van Peij N.N.M.E."/>
            <person name="Ram A.F.J."/>
            <person name="Rinas U."/>
            <person name="Roubos J.A."/>
            <person name="Sagt C.M.J."/>
            <person name="Schmoll M."/>
            <person name="Sun J."/>
            <person name="Ussery D."/>
            <person name="Varga J."/>
            <person name="Vervecken W."/>
            <person name="van de Vondervoort P.J.J."/>
            <person name="Wedler H."/>
            <person name="Woesten H.A.B."/>
            <person name="Zeng A.-P."/>
            <person name="van Ooyen A.J.J."/>
            <person name="Visser J."/>
            <person name="Stam H."/>
        </authorList>
    </citation>
    <scope>NUCLEOTIDE SEQUENCE [LARGE SCALE GENOMIC DNA]</scope>
    <source>
        <strain>ATCC MYA-4892 / CBS 513.88 / FGSC A1513</strain>
    </source>
</reference>
<reference key="2">
    <citation type="journal article" date="2018" name="Bioprocess Biosyst. Eng.">
        <title>Morphological regulation of Aspergillus niger to improve citric acid production by chsC gene silencing.</title>
        <authorList>
            <person name="Sun X."/>
            <person name="Wu H."/>
            <person name="Zhao G."/>
            <person name="Li Z."/>
            <person name="Wu X."/>
            <person name="Liu H."/>
            <person name="Zheng Z."/>
        </authorList>
    </citation>
    <scope>FUNCTION</scope>
    <scope>DISRUPTION PHENOTYPE</scope>
</reference>
<reference key="3">
    <citation type="journal article" date="2023" name="J. Fungi">
        <title>ChsA, a class II chitin synthase, contributes to asexual conidiation, mycelial morphology, cell wall integrity, and the production of enzymes and organic acids in Aspergillus niger.</title>
        <authorList>
            <person name="Zhu Y."/>
            <person name="Liu T."/>
            <person name="Wang Y."/>
            <person name="Chen G."/>
            <person name="Fang X."/>
            <person name="Zhou G."/>
            <person name="Wang J."/>
        </authorList>
    </citation>
    <scope>FUNCTION</scope>
    <scope>DISRUPTION PHENOTYPE</scope>
</reference>
<reference key="4">
    <citation type="journal article" date="2024" name="Fungal Biol. Biotechnol.">
        <title>Breaking down barriers: comprehensive functional analysis of the Aspergillus niger chitin synthase repertoire.</title>
        <authorList>
            <person name="Barthel L."/>
            <person name="Cairns T."/>
            <person name="Duda S."/>
            <person name="Mueller H."/>
            <person name="Dobbert B."/>
            <person name="Jung S."/>
            <person name="Briesen H."/>
            <person name="Meyer V."/>
        </authorList>
    </citation>
    <scope>FUNCTION</scope>
    <scope>DISRUPTION PHENOTYPE</scope>
</reference>